<protein>
    <recommendedName>
        <fullName>Putative DNA-directed RNA polymerase subunit omega</fullName>
        <shortName>PEP</shortName>
        <ecNumber>2.7.7.6</ecNumber>
    </recommendedName>
    <alternativeName>
        <fullName>Plastid-encoded RNA polymerase omega subunit</fullName>
        <shortName>RNA polymerase omega subunit</shortName>
    </alternativeName>
</protein>
<gene>
    <name type="primary">rpoZ</name>
    <name type="synonym">ycf61</name>
</gene>
<evidence type="ECO:0000250" key="1"/>
<evidence type="ECO:0000305" key="2"/>
<comment type="function">
    <text evidence="1">May be involved in RNA polymerase activity.</text>
</comment>
<comment type="catalytic activity">
    <reaction>
        <text>RNA(n) + a ribonucleoside 5'-triphosphate = RNA(n+1) + diphosphate</text>
        <dbReference type="Rhea" id="RHEA:21248"/>
        <dbReference type="Rhea" id="RHEA-COMP:14527"/>
        <dbReference type="Rhea" id="RHEA-COMP:17342"/>
        <dbReference type="ChEBI" id="CHEBI:33019"/>
        <dbReference type="ChEBI" id="CHEBI:61557"/>
        <dbReference type="ChEBI" id="CHEBI:140395"/>
        <dbReference type="EC" id="2.7.7.6"/>
    </reaction>
</comment>
<comment type="subcellular location">
    <subcellularLocation>
        <location>Plastid</location>
        <location>Chloroplast</location>
    </subcellularLocation>
</comment>
<comment type="similarity">
    <text evidence="2">Belongs to the RNA polymerase subunit omega family.</text>
</comment>
<sequence>MRNKIPYDSKKILYDSELLLNSASNRYILTMKVANRANLRRYEEFETMNHSSIKPIARTIIEMVDDKNFLVVKKK</sequence>
<organism>
    <name type="scientific">Mesostigma viride</name>
    <name type="common">Green alga</name>
    <dbReference type="NCBI Taxonomy" id="41882"/>
    <lineage>
        <taxon>Eukaryota</taxon>
        <taxon>Viridiplantae</taxon>
        <taxon>Streptophyta</taxon>
        <taxon>Mesostigmatophyceae</taxon>
        <taxon>Mesostigmatales</taxon>
        <taxon>Mesostigmataceae</taxon>
        <taxon>Mesostigma</taxon>
    </lineage>
</organism>
<feature type="chain" id="PRO_0000129024" description="Putative DNA-directed RNA polymerase subunit omega">
    <location>
        <begin position="1"/>
        <end position="75"/>
    </location>
</feature>
<keyword id="KW-0150">Chloroplast</keyword>
<keyword id="KW-0240">DNA-directed RNA polymerase</keyword>
<keyword id="KW-0548">Nucleotidyltransferase</keyword>
<keyword id="KW-0934">Plastid</keyword>
<keyword id="KW-0804">Transcription</keyword>
<keyword id="KW-0808">Transferase</keyword>
<name>RPOZ_MESVI</name>
<geneLocation type="chloroplast"/>
<proteinExistence type="inferred from homology"/>
<dbReference type="EC" id="2.7.7.6"/>
<dbReference type="EMBL" id="AF166114">
    <property type="protein sequence ID" value="AAF43881.1"/>
    <property type="molecule type" value="Genomic_DNA"/>
</dbReference>
<dbReference type="RefSeq" id="NP_038443.1">
    <property type="nucleotide sequence ID" value="NC_002186.1"/>
</dbReference>
<dbReference type="SMR" id="Q9MUL7"/>
<dbReference type="GeneID" id="800936"/>
<dbReference type="GO" id="GO:0009507">
    <property type="term" value="C:chloroplast"/>
    <property type="evidence" value="ECO:0007669"/>
    <property type="project" value="UniProtKB-SubCell"/>
</dbReference>
<dbReference type="GO" id="GO:0000428">
    <property type="term" value="C:DNA-directed RNA polymerase complex"/>
    <property type="evidence" value="ECO:0007669"/>
    <property type="project" value="UniProtKB-KW"/>
</dbReference>
<dbReference type="GO" id="GO:0005739">
    <property type="term" value="C:mitochondrion"/>
    <property type="evidence" value="ECO:0007669"/>
    <property type="project" value="GOC"/>
</dbReference>
<dbReference type="GO" id="GO:0003677">
    <property type="term" value="F:DNA binding"/>
    <property type="evidence" value="ECO:0007669"/>
    <property type="project" value="UniProtKB-UniRule"/>
</dbReference>
<dbReference type="GO" id="GO:0003899">
    <property type="term" value="F:DNA-directed RNA polymerase activity"/>
    <property type="evidence" value="ECO:0007669"/>
    <property type="project" value="UniProtKB-UniRule"/>
</dbReference>
<dbReference type="GO" id="GO:0006351">
    <property type="term" value="P:DNA-templated transcription"/>
    <property type="evidence" value="ECO:0007669"/>
    <property type="project" value="UniProtKB-UniRule"/>
</dbReference>
<dbReference type="HAMAP" id="MF_00366">
    <property type="entry name" value="RNApol_bact_RpoZ"/>
    <property type="match status" value="1"/>
</dbReference>
<dbReference type="InterPro" id="IPR003716">
    <property type="entry name" value="DNA-dir_RNA_pol_omega"/>
</dbReference>
<dbReference type="InterPro" id="IPR036161">
    <property type="entry name" value="RPB6/omega-like_sf"/>
</dbReference>
<dbReference type="SUPFAM" id="SSF63562">
    <property type="entry name" value="RPB6/omega subunit-like"/>
    <property type="match status" value="1"/>
</dbReference>
<reference key="1">
    <citation type="journal article" date="2000" name="Nature">
        <title>Ancestral chloroplast genome in Mesostigma viride reveals an early branch of green plant evolution.</title>
        <authorList>
            <person name="Lemieux C."/>
            <person name="Otis C."/>
            <person name="Turmel M."/>
        </authorList>
    </citation>
    <scope>NUCLEOTIDE SEQUENCE [LARGE SCALE GENOMIC DNA]</scope>
    <source>
        <strain>NIES-296 / KY-14 / CCMP 2046</strain>
    </source>
</reference>
<accession>Q9MUL7</accession>